<sequence>MSQQVIIFDTTLRDGEQALQASLSVKEKLQIALALERMGVDVMEVGFPVSSPGDFESVQTIARQVKNSRVCALARCVEKDIDVAAESLKVAEAFRIHTFIATSPMHIATKLRSTLDEVIERAIYMVKRARNYTDDVEFSCEDAGRTPIADLARVVEAAINAGATTINIPDTVGYTMPFEFAGIISGLYERVPNIDKAIISVHTHDDLGLAVGNSLAAVHAGARQVEGAMNGIGERAGNCSLEEVIMAIKVRKDILNVHTAINHQEIWRTSQLVSQICNMPIPANKAIVGSGAFAHSSGIHQDGVLKNRENYEIMTPESIGLNQIQLNLTSRSGRAAVKHRMDEMGYKESEYNLDNLYDAFLKLADKKGQVFDYDLEALAFIGKQQEEPEHFRLDYFSVQSGSNDIATAAVKLACGEEVKAEAANGNGPVDAVYQAINRITDYNVELVKYSLTAKGHGKDALGQVDIVANYNGRRFHGVGLATDIVESSAKAMVHVLNNIWRAAEVEKELQRKAQHNENNKETV</sequence>
<feature type="chain" id="PRO_1000149197" description="2-isopropylmalate synthase">
    <location>
        <begin position="1"/>
        <end position="523"/>
    </location>
</feature>
<feature type="domain" description="Pyruvate carboxyltransferase" evidence="1">
    <location>
        <begin position="5"/>
        <end position="267"/>
    </location>
</feature>
<feature type="region of interest" description="Regulatory domain" evidence="1">
    <location>
        <begin position="392"/>
        <end position="523"/>
    </location>
</feature>
<feature type="binding site" evidence="1">
    <location>
        <position position="14"/>
    </location>
    <ligand>
        <name>Mn(2+)</name>
        <dbReference type="ChEBI" id="CHEBI:29035"/>
    </ligand>
</feature>
<feature type="binding site" evidence="1">
    <location>
        <position position="202"/>
    </location>
    <ligand>
        <name>Mn(2+)</name>
        <dbReference type="ChEBI" id="CHEBI:29035"/>
    </ligand>
</feature>
<feature type="binding site" evidence="1">
    <location>
        <position position="204"/>
    </location>
    <ligand>
        <name>Mn(2+)</name>
        <dbReference type="ChEBI" id="CHEBI:29035"/>
    </ligand>
</feature>
<feature type="binding site" evidence="1">
    <location>
        <position position="238"/>
    </location>
    <ligand>
        <name>Mn(2+)</name>
        <dbReference type="ChEBI" id="CHEBI:29035"/>
    </ligand>
</feature>
<reference key="1">
    <citation type="journal article" date="2006" name="Proc. Natl. Acad. Sci. U.S.A.">
        <title>Identification of genes subject to positive selection in uropathogenic strains of Escherichia coli: a comparative genomics approach.</title>
        <authorList>
            <person name="Chen S.L."/>
            <person name="Hung C.-S."/>
            <person name="Xu J."/>
            <person name="Reigstad C.S."/>
            <person name="Magrini V."/>
            <person name="Sabo A."/>
            <person name="Blasiar D."/>
            <person name="Bieri T."/>
            <person name="Meyer R.R."/>
            <person name="Ozersky P."/>
            <person name="Armstrong J.R."/>
            <person name="Fulton R.S."/>
            <person name="Latreille J.P."/>
            <person name="Spieth J."/>
            <person name="Hooton T.M."/>
            <person name="Mardis E.R."/>
            <person name="Hultgren S.J."/>
            <person name="Gordon J.I."/>
        </authorList>
    </citation>
    <scope>NUCLEOTIDE SEQUENCE [LARGE SCALE GENOMIC DNA]</scope>
    <source>
        <strain>UTI89 / UPEC</strain>
    </source>
</reference>
<comment type="function">
    <text evidence="1">Catalyzes the condensation of the acetyl group of acetyl-CoA with 3-methyl-2-oxobutanoate (2-ketoisovalerate) to form 3-carboxy-3-hydroxy-4-methylpentanoate (2-isopropylmalate).</text>
</comment>
<comment type="catalytic activity">
    <reaction evidence="1">
        <text>3-methyl-2-oxobutanoate + acetyl-CoA + H2O = (2S)-2-isopropylmalate + CoA + H(+)</text>
        <dbReference type="Rhea" id="RHEA:21524"/>
        <dbReference type="ChEBI" id="CHEBI:1178"/>
        <dbReference type="ChEBI" id="CHEBI:11851"/>
        <dbReference type="ChEBI" id="CHEBI:15377"/>
        <dbReference type="ChEBI" id="CHEBI:15378"/>
        <dbReference type="ChEBI" id="CHEBI:57287"/>
        <dbReference type="ChEBI" id="CHEBI:57288"/>
        <dbReference type="EC" id="2.3.3.13"/>
    </reaction>
</comment>
<comment type="cofactor">
    <cofactor evidence="1">
        <name>Mn(2+)</name>
        <dbReference type="ChEBI" id="CHEBI:29035"/>
    </cofactor>
</comment>
<comment type="pathway">
    <text evidence="1">Amino-acid biosynthesis; L-leucine biosynthesis; L-leucine from 3-methyl-2-oxobutanoate: step 1/4.</text>
</comment>
<comment type="subunit">
    <text evidence="1">Homodimer.</text>
</comment>
<comment type="subcellular location">
    <subcellularLocation>
        <location evidence="1">Cytoplasm</location>
    </subcellularLocation>
</comment>
<comment type="similarity">
    <text evidence="1">Belongs to the alpha-IPM synthase/homocitrate synthase family. LeuA type 1 subfamily.</text>
</comment>
<gene>
    <name evidence="1" type="primary">leuA</name>
    <name type="ordered locus">UTI89_C0081</name>
</gene>
<accession>Q1RGC3</accession>
<keyword id="KW-0028">Amino-acid biosynthesis</keyword>
<keyword id="KW-0100">Branched-chain amino acid biosynthesis</keyword>
<keyword id="KW-0963">Cytoplasm</keyword>
<keyword id="KW-0432">Leucine biosynthesis</keyword>
<keyword id="KW-0464">Manganese</keyword>
<keyword id="KW-0479">Metal-binding</keyword>
<keyword id="KW-0808">Transferase</keyword>
<proteinExistence type="inferred from homology"/>
<evidence type="ECO:0000255" key="1">
    <source>
        <dbReference type="HAMAP-Rule" id="MF_01025"/>
    </source>
</evidence>
<protein>
    <recommendedName>
        <fullName evidence="1">2-isopropylmalate synthase</fullName>
        <ecNumber evidence="1">2.3.3.13</ecNumber>
    </recommendedName>
    <alternativeName>
        <fullName evidence="1">Alpha-IPM synthase</fullName>
    </alternativeName>
    <alternativeName>
        <fullName evidence="1">Alpha-isopropylmalate synthase</fullName>
    </alternativeName>
</protein>
<organism>
    <name type="scientific">Escherichia coli (strain UTI89 / UPEC)</name>
    <dbReference type="NCBI Taxonomy" id="364106"/>
    <lineage>
        <taxon>Bacteria</taxon>
        <taxon>Pseudomonadati</taxon>
        <taxon>Pseudomonadota</taxon>
        <taxon>Gammaproteobacteria</taxon>
        <taxon>Enterobacterales</taxon>
        <taxon>Enterobacteriaceae</taxon>
        <taxon>Escherichia</taxon>
    </lineage>
</organism>
<name>LEU1_ECOUT</name>
<dbReference type="EC" id="2.3.3.13" evidence="1"/>
<dbReference type="EMBL" id="CP000243">
    <property type="protein sequence ID" value="ABE05591.1"/>
    <property type="molecule type" value="Genomic_DNA"/>
</dbReference>
<dbReference type="RefSeq" id="WP_000082846.1">
    <property type="nucleotide sequence ID" value="NZ_CP064825.1"/>
</dbReference>
<dbReference type="SMR" id="Q1RGC3"/>
<dbReference type="GeneID" id="75202109"/>
<dbReference type="KEGG" id="eci:UTI89_C0081"/>
<dbReference type="HOGENOM" id="CLU_022158_0_1_6"/>
<dbReference type="UniPathway" id="UPA00048">
    <property type="reaction ID" value="UER00070"/>
</dbReference>
<dbReference type="Proteomes" id="UP000001952">
    <property type="component" value="Chromosome"/>
</dbReference>
<dbReference type="GO" id="GO:0005829">
    <property type="term" value="C:cytosol"/>
    <property type="evidence" value="ECO:0007669"/>
    <property type="project" value="TreeGrafter"/>
</dbReference>
<dbReference type="GO" id="GO:0003852">
    <property type="term" value="F:2-isopropylmalate synthase activity"/>
    <property type="evidence" value="ECO:0007669"/>
    <property type="project" value="UniProtKB-UniRule"/>
</dbReference>
<dbReference type="GO" id="GO:0003985">
    <property type="term" value="F:acetyl-CoA C-acetyltransferase activity"/>
    <property type="evidence" value="ECO:0007669"/>
    <property type="project" value="UniProtKB-UniRule"/>
</dbReference>
<dbReference type="GO" id="GO:0030145">
    <property type="term" value="F:manganese ion binding"/>
    <property type="evidence" value="ECO:0007669"/>
    <property type="project" value="UniProtKB-UniRule"/>
</dbReference>
<dbReference type="GO" id="GO:0009098">
    <property type="term" value="P:L-leucine biosynthetic process"/>
    <property type="evidence" value="ECO:0007669"/>
    <property type="project" value="UniProtKB-UniRule"/>
</dbReference>
<dbReference type="CDD" id="cd07940">
    <property type="entry name" value="DRE_TIM_IPMS"/>
    <property type="match status" value="1"/>
</dbReference>
<dbReference type="FunFam" id="1.10.238.260:FF:000001">
    <property type="entry name" value="2-isopropylmalate synthase"/>
    <property type="match status" value="1"/>
</dbReference>
<dbReference type="FunFam" id="3.20.20.70:FF:000010">
    <property type="entry name" value="2-isopropylmalate synthase"/>
    <property type="match status" value="1"/>
</dbReference>
<dbReference type="FunFam" id="3.30.160.270:FF:000001">
    <property type="entry name" value="2-isopropylmalate synthase"/>
    <property type="match status" value="1"/>
</dbReference>
<dbReference type="Gene3D" id="1.10.238.260">
    <property type="match status" value="1"/>
</dbReference>
<dbReference type="Gene3D" id="3.30.160.270">
    <property type="match status" value="1"/>
</dbReference>
<dbReference type="Gene3D" id="3.20.20.70">
    <property type="entry name" value="Aldolase class I"/>
    <property type="match status" value="1"/>
</dbReference>
<dbReference type="HAMAP" id="MF_01025">
    <property type="entry name" value="LeuA_type1"/>
    <property type="match status" value="1"/>
</dbReference>
<dbReference type="InterPro" id="IPR050073">
    <property type="entry name" value="2-IPM_HCS-like"/>
</dbReference>
<dbReference type="InterPro" id="IPR013709">
    <property type="entry name" value="2-isopropylmalate_synth_dimer"/>
</dbReference>
<dbReference type="InterPro" id="IPR002034">
    <property type="entry name" value="AIPM/Hcit_synth_CS"/>
</dbReference>
<dbReference type="InterPro" id="IPR013785">
    <property type="entry name" value="Aldolase_TIM"/>
</dbReference>
<dbReference type="InterPro" id="IPR054691">
    <property type="entry name" value="LeuA/HCS_post-cat"/>
</dbReference>
<dbReference type="InterPro" id="IPR036230">
    <property type="entry name" value="LeuA_allosteric_dom_sf"/>
</dbReference>
<dbReference type="InterPro" id="IPR005671">
    <property type="entry name" value="LeuA_bact_synth"/>
</dbReference>
<dbReference type="InterPro" id="IPR000891">
    <property type="entry name" value="PYR_CT"/>
</dbReference>
<dbReference type="NCBIfam" id="TIGR00973">
    <property type="entry name" value="leuA_bact"/>
    <property type="match status" value="1"/>
</dbReference>
<dbReference type="NCBIfam" id="NF002084">
    <property type="entry name" value="PRK00915.1-1"/>
    <property type="match status" value="1"/>
</dbReference>
<dbReference type="NCBIfam" id="NF002086">
    <property type="entry name" value="PRK00915.1-3"/>
    <property type="match status" value="1"/>
</dbReference>
<dbReference type="PANTHER" id="PTHR10277:SF9">
    <property type="entry name" value="2-ISOPROPYLMALATE SYNTHASE 1, CHLOROPLASTIC-RELATED"/>
    <property type="match status" value="1"/>
</dbReference>
<dbReference type="PANTHER" id="PTHR10277">
    <property type="entry name" value="HOMOCITRATE SYNTHASE-RELATED"/>
    <property type="match status" value="1"/>
</dbReference>
<dbReference type="Pfam" id="PF22617">
    <property type="entry name" value="HCS_D2"/>
    <property type="match status" value="1"/>
</dbReference>
<dbReference type="Pfam" id="PF00682">
    <property type="entry name" value="HMGL-like"/>
    <property type="match status" value="1"/>
</dbReference>
<dbReference type="Pfam" id="PF08502">
    <property type="entry name" value="LeuA_dimer"/>
    <property type="match status" value="1"/>
</dbReference>
<dbReference type="SMART" id="SM00917">
    <property type="entry name" value="LeuA_dimer"/>
    <property type="match status" value="1"/>
</dbReference>
<dbReference type="SUPFAM" id="SSF110921">
    <property type="entry name" value="2-isopropylmalate synthase LeuA, allosteric (dimerisation) domain"/>
    <property type="match status" value="1"/>
</dbReference>
<dbReference type="SUPFAM" id="SSF51569">
    <property type="entry name" value="Aldolase"/>
    <property type="match status" value="1"/>
</dbReference>
<dbReference type="PROSITE" id="PS00815">
    <property type="entry name" value="AIPM_HOMOCIT_SYNTH_1"/>
    <property type="match status" value="1"/>
</dbReference>
<dbReference type="PROSITE" id="PS00816">
    <property type="entry name" value="AIPM_HOMOCIT_SYNTH_2"/>
    <property type="match status" value="1"/>
</dbReference>
<dbReference type="PROSITE" id="PS50991">
    <property type="entry name" value="PYR_CT"/>
    <property type="match status" value="1"/>
</dbReference>